<organism>
    <name type="scientific">Helicobacter acinonychis (strain Sheeba)</name>
    <dbReference type="NCBI Taxonomy" id="382638"/>
    <lineage>
        <taxon>Bacteria</taxon>
        <taxon>Pseudomonadati</taxon>
        <taxon>Campylobacterota</taxon>
        <taxon>Epsilonproteobacteria</taxon>
        <taxon>Campylobacterales</taxon>
        <taxon>Helicobacteraceae</taxon>
        <taxon>Helicobacter</taxon>
    </lineage>
</organism>
<proteinExistence type="inferred from homology"/>
<comment type="function">
    <text evidence="1">Catalyzes the irreversible transfer of a propylamine group from the amino donor S-adenosylmethioninamine (decarboxy-AdoMet) to putrescine (1,4-diaminobutane) to yield spermidine.</text>
</comment>
<comment type="catalytic activity">
    <reaction evidence="1">
        <text>S-adenosyl 3-(methylsulfanyl)propylamine + putrescine = S-methyl-5'-thioadenosine + spermidine + H(+)</text>
        <dbReference type="Rhea" id="RHEA:12721"/>
        <dbReference type="ChEBI" id="CHEBI:15378"/>
        <dbReference type="ChEBI" id="CHEBI:17509"/>
        <dbReference type="ChEBI" id="CHEBI:57443"/>
        <dbReference type="ChEBI" id="CHEBI:57834"/>
        <dbReference type="ChEBI" id="CHEBI:326268"/>
        <dbReference type="EC" id="2.5.1.16"/>
    </reaction>
</comment>
<comment type="pathway">
    <text evidence="1">Amine and polyamine biosynthesis; spermidine biosynthesis; spermidine from putrescine: step 1/1.</text>
</comment>
<comment type="subunit">
    <text evidence="1">Homodimer or homotetramer.</text>
</comment>
<comment type="subcellular location">
    <subcellularLocation>
        <location evidence="1">Cytoplasm</location>
    </subcellularLocation>
</comment>
<comment type="similarity">
    <text evidence="1">Belongs to the spermidine/spermine synthase family.</text>
</comment>
<feature type="chain" id="PRO_1000012001" description="Polyamine aminopropyltransferase">
    <location>
        <begin position="1"/>
        <end position="262"/>
    </location>
</feature>
<feature type="domain" description="PABS" evidence="1">
    <location>
        <begin position="1"/>
        <end position="249"/>
    </location>
</feature>
<feature type="active site" description="Proton acceptor" evidence="1">
    <location>
        <position position="155"/>
    </location>
</feature>
<feature type="binding site" evidence="1">
    <location>
        <position position="29"/>
    </location>
    <ligand>
        <name>S-methyl-5'-thioadenosine</name>
        <dbReference type="ChEBI" id="CHEBI:17509"/>
    </ligand>
</feature>
<feature type="binding site" evidence="1">
    <location>
        <position position="83"/>
    </location>
    <ligand>
        <name>spermidine</name>
        <dbReference type="ChEBI" id="CHEBI:57834"/>
    </ligand>
</feature>
<reference key="1">
    <citation type="journal article" date="2006" name="PLoS Genet.">
        <title>Who ate whom? Adaptive Helicobacter genomic changes that accompanied a host jump from early humans to large felines.</title>
        <authorList>
            <person name="Eppinger M."/>
            <person name="Baar C."/>
            <person name="Linz B."/>
            <person name="Raddatz G."/>
            <person name="Lanz C."/>
            <person name="Keller H."/>
            <person name="Morelli G."/>
            <person name="Gressmann H."/>
            <person name="Achtman M."/>
            <person name="Schuster S.C."/>
        </authorList>
    </citation>
    <scope>NUCLEOTIDE SEQUENCE [LARGE SCALE GENOMIC DNA]</scope>
    <source>
        <strain>Sheeba</strain>
    </source>
</reference>
<sequence>MWITQEITPYLRKEYTIEAKLLDVRSDHNILEIFKSNDFGEIAMLNSQLLFKNFLHIESELLAHMGGCTKKELKEVLIVDGFDLELAHQLFKYDTHVDFVQADEKILDSFISFFPHFHGVKNNKNFTHAKQFLDLDIKKYDLIVCLQEPDKHKIDGLKRTLKEDGVFISVAKHPLLEHVSMQNALKNMGEFFSIVMPFVAPLRILSNKGYIYASLKTHPLKDLIAQKIEALKNVGYYNEDIHRAAFALPKNLQEILKENIKS</sequence>
<name>SPEE_HELAH</name>
<keyword id="KW-0963">Cytoplasm</keyword>
<keyword id="KW-0620">Polyamine biosynthesis</keyword>
<keyword id="KW-0745">Spermidine biosynthesis</keyword>
<keyword id="KW-0808">Transferase</keyword>
<evidence type="ECO:0000255" key="1">
    <source>
        <dbReference type="HAMAP-Rule" id="MF_00198"/>
    </source>
</evidence>
<gene>
    <name evidence="1" type="primary">speE</name>
    <name type="ordered locus">Hac_1202</name>
</gene>
<protein>
    <recommendedName>
        <fullName evidence="1">Polyamine aminopropyltransferase</fullName>
    </recommendedName>
    <alternativeName>
        <fullName evidence="1">Putrescine aminopropyltransferase</fullName>
        <shortName evidence="1">PAPT</shortName>
    </alternativeName>
    <alternativeName>
        <fullName evidence="1">Spermidine synthase</fullName>
        <shortName evidence="1">SPDS</shortName>
        <shortName evidence="1">SPDSY</shortName>
        <ecNumber evidence="1">2.5.1.16</ecNumber>
    </alternativeName>
</protein>
<accession>Q17WL9</accession>
<dbReference type="EC" id="2.5.1.16" evidence="1"/>
<dbReference type="EMBL" id="AM260522">
    <property type="protein sequence ID" value="CAJ99957.1"/>
    <property type="molecule type" value="Genomic_DNA"/>
</dbReference>
<dbReference type="RefSeq" id="WP_011578064.1">
    <property type="nucleotide sequence ID" value="NC_008229.1"/>
</dbReference>
<dbReference type="SMR" id="Q17WL9"/>
<dbReference type="STRING" id="382638.Hac_1202"/>
<dbReference type="GeneID" id="31758548"/>
<dbReference type="KEGG" id="hac:Hac_1202"/>
<dbReference type="eggNOG" id="COG0421">
    <property type="taxonomic scope" value="Bacteria"/>
</dbReference>
<dbReference type="HOGENOM" id="CLU_048199_0_0_7"/>
<dbReference type="OrthoDB" id="9793120at2"/>
<dbReference type="BioCyc" id="HACI382638:HAC_RS05180-MONOMER"/>
<dbReference type="UniPathway" id="UPA00248">
    <property type="reaction ID" value="UER00314"/>
</dbReference>
<dbReference type="Proteomes" id="UP000000775">
    <property type="component" value="Chromosome"/>
</dbReference>
<dbReference type="GO" id="GO:0005829">
    <property type="term" value="C:cytosol"/>
    <property type="evidence" value="ECO:0007669"/>
    <property type="project" value="TreeGrafter"/>
</dbReference>
<dbReference type="GO" id="GO:0004766">
    <property type="term" value="F:spermidine synthase activity"/>
    <property type="evidence" value="ECO:0007669"/>
    <property type="project" value="UniProtKB-UniRule"/>
</dbReference>
<dbReference type="GO" id="GO:0008295">
    <property type="term" value="P:spermidine biosynthetic process"/>
    <property type="evidence" value="ECO:0007669"/>
    <property type="project" value="UniProtKB-UniRule"/>
</dbReference>
<dbReference type="Gene3D" id="2.30.140.10">
    <property type="entry name" value="Spermidine synthase, tetramerisation domain"/>
    <property type="match status" value="1"/>
</dbReference>
<dbReference type="Gene3D" id="3.40.50.150">
    <property type="entry name" value="Vaccinia Virus protein VP39"/>
    <property type="match status" value="1"/>
</dbReference>
<dbReference type="HAMAP" id="MF_00198">
    <property type="entry name" value="Spermidine_synth"/>
    <property type="match status" value="1"/>
</dbReference>
<dbReference type="InterPro" id="IPR030374">
    <property type="entry name" value="PABS"/>
</dbReference>
<dbReference type="InterPro" id="IPR029063">
    <property type="entry name" value="SAM-dependent_MTases_sf"/>
</dbReference>
<dbReference type="InterPro" id="IPR001045">
    <property type="entry name" value="Spermi_synthase"/>
</dbReference>
<dbReference type="InterPro" id="IPR035246">
    <property type="entry name" value="Spermidine_synt_N"/>
</dbReference>
<dbReference type="InterPro" id="IPR037163">
    <property type="entry name" value="Spermidine_synt_N_sf"/>
</dbReference>
<dbReference type="NCBIfam" id="NF001811">
    <property type="entry name" value="PRK00536.1"/>
    <property type="match status" value="1"/>
</dbReference>
<dbReference type="PANTHER" id="PTHR11558:SF11">
    <property type="entry name" value="SPERMIDINE SYNTHASE"/>
    <property type="match status" value="1"/>
</dbReference>
<dbReference type="PANTHER" id="PTHR11558">
    <property type="entry name" value="SPERMIDINE/SPERMINE SYNTHASE"/>
    <property type="match status" value="1"/>
</dbReference>
<dbReference type="Pfam" id="PF17284">
    <property type="entry name" value="Spermine_synt_N"/>
    <property type="match status" value="1"/>
</dbReference>
<dbReference type="Pfam" id="PF01564">
    <property type="entry name" value="Spermine_synth"/>
    <property type="match status" value="1"/>
</dbReference>
<dbReference type="SUPFAM" id="SSF53335">
    <property type="entry name" value="S-adenosyl-L-methionine-dependent methyltransferases"/>
    <property type="match status" value="1"/>
</dbReference>
<dbReference type="PROSITE" id="PS51006">
    <property type="entry name" value="PABS_2"/>
    <property type="match status" value="1"/>
</dbReference>